<comment type="function">
    <text evidence="1">GTPase that plays an essential role in the late steps of ribosome biogenesis.</text>
</comment>
<comment type="subunit">
    <text evidence="1">Associates with the 50S ribosomal subunit.</text>
</comment>
<comment type="similarity">
    <text evidence="1">Belongs to the TRAFAC class TrmE-Era-EngA-EngB-Septin-like GTPase superfamily. EngA (Der) GTPase family.</text>
</comment>
<gene>
    <name evidence="1" type="primary">der</name>
    <name type="synonym">engA</name>
    <name type="ordered locus">Gura_3149</name>
</gene>
<feature type="chain" id="PRO_1000077660" description="GTPase Der">
    <location>
        <begin position="1"/>
        <end position="441"/>
    </location>
</feature>
<feature type="domain" description="EngA-type G 1">
    <location>
        <begin position="3"/>
        <end position="167"/>
    </location>
</feature>
<feature type="domain" description="EngA-type G 2">
    <location>
        <begin position="176"/>
        <end position="351"/>
    </location>
</feature>
<feature type="domain" description="KH-like" evidence="1">
    <location>
        <begin position="352"/>
        <end position="436"/>
    </location>
</feature>
<feature type="binding site" evidence="1">
    <location>
        <begin position="9"/>
        <end position="16"/>
    </location>
    <ligand>
        <name>GTP</name>
        <dbReference type="ChEBI" id="CHEBI:37565"/>
        <label>1</label>
    </ligand>
</feature>
<feature type="binding site" evidence="1">
    <location>
        <begin position="56"/>
        <end position="60"/>
    </location>
    <ligand>
        <name>GTP</name>
        <dbReference type="ChEBI" id="CHEBI:37565"/>
        <label>1</label>
    </ligand>
</feature>
<feature type="binding site" evidence="1">
    <location>
        <begin position="119"/>
        <end position="122"/>
    </location>
    <ligand>
        <name>GTP</name>
        <dbReference type="ChEBI" id="CHEBI:37565"/>
        <label>1</label>
    </ligand>
</feature>
<feature type="binding site" evidence="1">
    <location>
        <begin position="182"/>
        <end position="189"/>
    </location>
    <ligand>
        <name>GTP</name>
        <dbReference type="ChEBI" id="CHEBI:37565"/>
        <label>2</label>
    </ligand>
</feature>
<feature type="binding site" evidence="1">
    <location>
        <begin position="229"/>
        <end position="233"/>
    </location>
    <ligand>
        <name>GTP</name>
        <dbReference type="ChEBI" id="CHEBI:37565"/>
        <label>2</label>
    </ligand>
</feature>
<feature type="binding site" evidence="1">
    <location>
        <begin position="294"/>
        <end position="297"/>
    </location>
    <ligand>
        <name>GTP</name>
        <dbReference type="ChEBI" id="CHEBI:37565"/>
        <label>2</label>
    </ligand>
</feature>
<accession>A5G692</accession>
<dbReference type="EMBL" id="CP000698">
    <property type="protein sequence ID" value="ABQ27310.1"/>
    <property type="molecule type" value="Genomic_DNA"/>
</dbReference>
<dbReference type="RefSeq" id="WP_011939976.1">
    <property type="nucleotide sequence ID" value="NC_009483.1"/>
</dbReference>
<dbReference type="SMR" id="A5G692"/>
<dbReference type="STRING" id="351605.Gura_3149"/>
<dbReference type="KEGG" id="gur:Gura_3149"/>
<dbReference type="HOGENOM" id="CLU_016077_6_2_7"/>
<dbReference type="OrthoDB" id="9805918at2"/>
<dbReference type="Proteomes" id="UP000006695">
    <property type="component" value="Chromosome"/>
</dbReference>
<dbReference type="GO" id="GO:0005525">
    <property type="term" value="F:GTP binding"/>
    <property type="evidence" value="ECO:0007669"/>
    <property type="project" value="UniProtKB-UniRule"/>
</dbReference>
<dbReference type="GO" id="GO:0043022">
    <property type="term" value="F:ribosome binding"/>
    <property type="evidence" value="ECO:0007669"/>
    <property type="project" value="TreeGrafter"/>
</dbReference>
<dbReference type="GO" id="GO:0042254">
    <property type="term" value="P:ribosome biogenesis"/>
    <property type="evidence" value="ECO:0007669"/>
    <property type="project" value="UniProtKB-KW"/>
</dbReference>
<dbReference type="CDD" id="cd01894">
    <property type="entry name" value="EngA1"/>
    <property type="match status" value="1"/>
</dbReference>
<dbReference type="CDD" id="cd01895">
    <property type="entry name" value="EngA2"/>
    <property type="match status" value="1"/>
</dbReference>
<dbReference type="FunFam" id="3.30.300.20:FF:000004">
    <property type="entry name" value="GTPase Der"/>
    <property type="match status" value="1"/>
</dbReference>
<dbReference type="FunFam" id="3.40.50.300:FF:000040">
    <property type="entry name" value="GTPase Der"/>
    <property type="match status" value="1"/>
</dbReference>
<dbReference type="FunFam" id="3.40.50.300:FF:000057">
    <property type="entry name" value="GTPase Der"/>
    <property type="match status" value="1"/>
</dbReference>
<dbReference type="Gene3D" id="3.30.300.20">
    <property type="match status" value="1"/>
</dbReference>
<dbReference type="Gene3D" id="3.40.50.300">
    <property type="entry name" value="P-loop containing nucleotide triphosphate hydrolases"/>
    <property type="match status" value="2"/>
</dbReference>
<dbReference type="HAMAP" id="MF_00195">
    <property type="entry name" value="GTPase_Der"/>
    <property type="match status" value="1"/>
</dbReference>
<dbReference type="InterPro" id="IPR031166">
    <property type="entry name" value="G_ENGA"/>
</dbReference>
<dbReference type="InterPro" id="IPR006073">
    <property type="entry name" value="GTP-bd"/>
</dbReference>
<dbReference type="InterPro" id="IPR016484">
    <property type="entry name" value="GTPase_Der"/>
</dbReference>
<dbReference type="InterPro" id="IPR032859">
    <property type="entry name" value="KH_dom-like"/>
</dbReference>
<dbReference type="InterPro" id="IPR015946">
    <property type="entry name" value="KH_dom-like_a/b"/>
</dbReference>
<dbReference type="InterPro" id="IPR027417">
    <property type="entry name" value="P-loop_NTPase"/>
</dbReference>
<dbReference type="InterPro" id="IPR005225">
    <property type="entry name" value="Small_GTP-bd"/>
</dbReference>
<dbReference type="NCBIfam" id="TIGR03594">
    <property type="entry name" value="GTPase_EngA"/>
    <property type="match status" value="1"/>
</dbReference>
<dbReference type="NCBIfam" id="TIGR00231">
    <property type="entry name" value="small_GTP"/>
    <property type="match status" value="2"/>
</dbReference>
<dbReference type="PANTHER" id="PTHR43834">
    <property type="entry name" value="GTPASE DER"/>
    <property type="match status" value="1"/>
</dbReference>
<dbReference type="PANTHER" id="PTHR43834:SF6">
    <property type="entry name" value="GTPASE DER"/>
    <property type="match status" value="1"/>
</dbReference>
<dbReference type="Pfam" id="PF14714">
    <property type="entry name" value="KH_dom-like"/>
    <property type="match status" value="1"/>
</dbReference>
<dbReference type="Pfam" id="PF01926">
    <property type="entry name" value="MMR_HSR1"/>
    <property type="match status" value="2"/>
</dbReference>
<dbReference type="PIRSF" id="PIRSF006485">
    <property type="entry name" value="GTP-binding_EngA"/>
    <property type="match status" value="1"/>
</dbReference>
<dbReference type="PRINTS" id="PR00326">
    <property type="entry name" value="GTP1OBG"/>
</dbReference>
<dbReference type="SUPFAM" id="SSF52540">
    <property type="entry name" value="P-loop containing nucleoside triphosphate hydrolases"/>
    <property type="match status" value="2"/>
</dbReference>
<dbReference type="PROSITE" id="PS51712">
    <property type="entry name" value="G_ENGA"/>
    <property type="match status" value="2"/>
</dbReference>
<organism>
    <name type="scientific">Geotalea uraniireducens (strain Rf4)</name>
    <name type="common">Geobacter uraniireducens</name>
    <dbReference type="NCBI Taxonomy" id="351605"/>
    <lineage>
        <taxon>Bacteria</taxon>
        <taxon>Pseudomonadati</taxon>
        <taxon>Thermodesulfobacteriota</taxon>
        <taxon>Desulfuromonadia</taxon>
        <taxon>Geobacterales</taxon>
        <taxon>Geobacteraceae</taxon>
        <taxon>Geotalea</taxon>
    </lineage>
</organism>
<sequence length="441" mass="49796">MRPLIAIVGRPNVGKSTLFNRIVGRRKAMVDDMPGVTRDRNYANVDRFDVPFILIDTGGFEPETNDRLLQQMREQSQLAMAEADVILFVMDGRDGLTPADVEVVEMLRRVDKPIFYLINKIDGDKQETAIGDFYTLGVDTIFTVSAEHNRGVNDLMDEVIKALPKGSAADTDEEVTKIAVIGRPNVGKSTLVNRLLGIERVVANPTPGTTRDSIDTYFTCNRKRYLLIDTAGIRRKGKTTEKIEKYSVVDSLRSIERADVVLIVIDAEEGVTEQDTKIAGYAYEAGRGCIFVVNKWDTLTKDNASMGKFIEKIRMEFKYLPFAPIVFVSAKTGQRLGKIMTEVDAVMEQFARRITTSDLNRVFSTATEEHHAPLYQGRRVKFYFATQVGTKPPSIVIFTNRPDGVHFSYERYIVNRFREAFGFTGTPMRLLFKGRESRKRA</sequence>
<evidence type="ECO:0000255" key="1">
    <source>
        <dbReference type="HAMAP-Rule" id="MF_00195"/>
    </source>
</evidence>
<name>DER_GEOUR</name>
<proteinExistence type="inferred from homology"/>
<keyword id="KW-0342">GTP-binding</keyword>
<keyword id="KW-0547">Nucleotide-binding</keyword>
<keyword id="KW-1185">Reference proteome</keyword>
<keyword id="KW-0677">Repeat</keyword>
<keyword id="KW-0690">Ribosome biogenesis</keyword>
<protein>
    <recommendedName>
        <fullName evidence="1">GTPase Der</fullName>
    </recommendedName>
    <alternativeName>
        <fullName evidence="1">GTP-binding protein EngA</fullName>
    </alternativeName>
</protein>
<reference key="1">
    <citation type="submission" date="2007-05" db="EMBL/GenBank/DDBJ databases">
        <title>Complete sequence of Geobacter uraniireducens Rf4.</title>
        <authorList>
            <consortium name="US DOE Joint Genome Institute"/>
            <person name="Copeland A."/>
            <person name="Lucas S."/>
            <person name="Lapidus A."/>
            <person name="Barry K."/>
            <person name="Detter J.C."/>
            <person name="Glavina del Rio T."/>
            <person name="Hammon N."/>
            <person name="Israni S."/>
            <person name="Dalin E."/>
            <person name="Tice H."/>
            <person name="Pitluck S."/>
            <person name="Chertkov O."/>
            <person name="Brettin T."/>
            <person name="Bruce D."/>
            <person name="Han C."/>
            <person name="Schmutz J."/>
            <person name="Larimer F."/>
            <person name="Land M."/>
            <person name="Hauser L."/>
            <person name="Kyrpides N."/>
            <person name="Mikhailova N."/>
            <person name="Shelobolina E."/>
            <person name="Aklujkar M."/>
            <person name="Lovley D."/>
            <person name="Richardson P."/>
        </authorList>
    </citation>
    <scope>NUCLEOTIDE SEQUENCE [LARGE SCALE GENOMIC DNA]</scope>
    <source>
        <strain>ATCC BAA-1134 / JCM 13001 / Rf4</strain>
    </source>
</reference>